<evidence type="ECO:0000250" key="1">
    <source>
        <dbReference type="UniProtKB" id="P38344"/>
    </source>
</evidence>
<evidence type="ECO:0000255" key="2">
    <source>
        <dbReference type="PROSITE-ProRule" id="PRU00042"/>
    </source>
</evidence>
<evidence type="ECO:0000256" key="3">
    <source>
        <dbReference type="SAM" id="MobiDB-lite"/>
    </source>
</evidence>
<evidence type="ECO:0000269" key="4">
    <source>
    </source>
</evidence>
<evidence type="ECO:0000269" key="5">
    <source>
    </source>
</evidence>
<evidence type="ECO:0000305" key="6"/>
<comment type="function">
    <text evidence="1">Pre-60S-associated factor involved in the cytoplasmic maturation of the 60S subunit. Involved in the dissociation and recycling of other late pre-60S factors before newly synthesized large ribosomal subunits enter translation (By similarity).</text>
</comment>
<comment type="subunit">
    <text evidence="1">Associates with nascent pre-60S particles that have not yet entered the translating pool, and is released from mature 60S subunits.</text>
</comment>
<comment type="subcellular location">
    <subcellularLocation>
        <location evidence="4">Cytoplasm</location>
    </subcellularLocation>
</comment>
<comment type="similarity">
    <text evidence="6">Belongs to the REI1 family.</text>
</comment>
<feature type="chain" id="PRO_0000310843" description="Cytoplasmic 60S subunit biogenesis factor SPCC550.15c">
    <location>
        <begin position="1"/>
        <end position="463"/>
    </location>
</feature>
<feature type="zinc finger region" description="C2H2-type 1" evidence="2">
    <location>
        <begin position="5"/>
        <end position="30"/>
    </location>
</feature>
<feature type="zinc finger region" description="C2H2-type 2" evidence="2">
    <location>
        <begin position="70"/>
        <end position="94"/>
    </location>
</feature>
<feature type="zinc finger region" description="C2H2-type 3" evidence="2">
    <location>
        <begin position="208"/>
        <end position="231"/>
    </location>
</feature>
<feature type="zinc finger region" description="C2H2-type 4" evidence="2">
    <location>
        <begin position="259"/>
        <end position="283"/>
    </location>
</feature>
<feature type="region of interest" description="Disordered" evidence="3">
    <location>
        <begin position="109"/>
        <end position="136"/>
    </location>
</feature>
<feature type="region of interest" description="Disordered" evidence="3">
    <location>
        <begin position="155"/>
        <end position="189"/>
    </location>
</feature>
<feature type="region of interest" description="Disordered" evidence="3">
    <location>
        <begin position="317"/>
        <end position="341"/>
    </location>
</feature>
<feature type="region of interest" description="Disordered" evidence="3">
    <location>
        <begin position="444"/>
        <end position="463"/>
    </location>
</feature>
<feature type="compositionally biased region" description="Polar residues" evidence="3">
    <location>
        <begin position="113"/>
        <end position="124"/>
    </location>
</feature>
<feature type="compositionally biased region" description="Polar residues" evidence="3">
    <location>
        <begin position="167"/>
        <end position="188"/>
    </location>
</feature>
<feature type="compositionally biased region" description="Acidic residues" evidence="3">
    <location>
        <begin position="317"/>
        <end position="338"/>
    </location>
</feature>
<feature type="modified residue" description="Phosphoserine" evidence="5">
    <location>
        <position position="150"/>
    </location>
</feature>
<feature type="modified residue" description="Phosphoserine" evidence="5">
    <location>
        <position position="155"/>
    </location>
</feature>
<accession>O59811</accession>
<organism>
    <name type="scientific">Schizosaccharomyces pombe (strain 972 / ATCC 24843)</name>
    <name type="common">Fission yeast</name>
    <dbReference type="NCBI Taxonomy" id="284812"/>
    <lineage>
        <taxon>Eukaryota</taxon>
        <taxon>Fungi</taxon>
        <taxon>Dikarya</taxon>
        <taxon>Ascomycota</taxon>
        <taxon>Taphrinomycotina</taxon>
        <taxon>Schizosaccharomycetes</taxon>
        <taxon>Schizosaccharomycetales</taxon>
        <taxon>Schizosaccharomycetaceae</taxon>
        <taxon>Schizosaccharomyces</taxon>
    </lineage>
</organism>
<name>REI1_SCHPO</name>
<reference key="1">
    <citation type="journal article" date="2002" name="Nature">
        <title>The genome sequence of Schizosaccharomyces pombe.</title>
        <authorList>
            <person name="Wood V."/>
            <person name="Gwilliam R."/>
            <person name="Rajandream M.A."/>
            <person name="Lyne M.H."/>
            <person name="Lyne R."/>
            <person name="Stewart A."/>
            <person name="Sgouros J.G."/>
            <person name="Peat N."/>
            <person name="Hayles J."/>
            <person name="Baker S.G."/>
            <person name="Basham D."/>
            <person name="Bowman S."/>
            <person name="Brooks K."/>
            <person name="Brown D."/>
            <person name="Brown S."/>
            <person name="Chillingworth T."/>
            <person name="Churcher C.M."/>
            <person name="Collins M."/>
            <person name="Connor R."/>
            <person name="Cronin A."/>
            <person name="Davis P."/>
            <person name="Feltwell T."/>
            <person name="Fraser A."/>
            <person name="Gentles S."/>
            <person name="Goble A."/>
            <person name="Hamlin N."/>
            <person name="Harris D.E."/>
            <person name="Hidalgo J."/>
            <person name="Hodgson G."/>
            <person name="Holroyd S."/>
            <person name="Hornsby T."/>
            <person name="Howarth S."/>
            <person name="Huckle E.J."/>
            <person name="Hunt S."/>
            <person name="Jagels K."/>
            <person name="James K.D."/>
            <person name="Jones L."/>
            <person name="Jones M."/>
            <person name="Leather S."/>
            <person name="McDonald S."/>
            <person name="McLean J."/>
            <person name="Mooney P."/>
            <person name="Moule S."/>
            <person name="Mungall K.L."/>
            <person name="Murphy L.D."/>
            <person name="Niblett D."/>
            <person name="Odell C."/>
            <person name="Oliver K."/>
            <person name="O'Neil S."/>
            <person name="Pearson D."/>
            <person name="Quail M.A."/>
            <person name="Rabbinowitsch E."/>
            <person name="Rutherford K.M."/>
            <person name="Rutter S."/>
            <person name="Saunders D."/>
            <person name="Seeger K."/>
            <person name="Sharp S."/>
            <person name="Skelton J."/>
            <person name="Simmonds M.N."/>
            <person name="Squares R."/>
            <person name="Squares S."/>
            <person name="Stevens K."/>
            <person name="Taylor K."/>
            <person name="Taylor R.G."/>
            <person name="Tivey A."/>
            <person name="Walsh S.V."/>
            <person name="Warren T."/>
            <person name="Whitehead S."/>
            <person name="Woodward J.R."/>
            <person name="Volckaert G."/>
            <person name="Aert R."/>
            <person name="Robben J."/>
            <person name="Grymonprez B."/>
            <person name="Weltjens I."/>
            <person name="Vanstreels E."/>
            <person name="Rieger M."/>
            <person name="Schaefer M."/>
            <person name="Mueller-Auer S."/>
            <person name="Gabel C."/>
            <person name="Fuchs M."/>
            <person name="Duesterhoeft A."/>
            <person name="Fritzc C."/>
            <person name="Holzer E."/>
            <person name="Moestl D."/>
            <person name="Hilbert H."/>
            <person name="Borzym K."/>
            <person name="Langer I."/>
            <person name="Beck A."/>
            <person name="Lehrach H."/>
            <person name="Reinhardt R."/>
            <person name="Pohl T.M."/>
            <person name="Eger P."/>
            <person name="Zimmermann W."/>
            <person name="Wedler H."/>
            <person name="Wambutt R."/>
            <person name="Purnelle B."/>
            <person name="Goffeau A."/>
            <person name="Cadieu E."/>
            <person name="Dreano S."/>
            <person name="Gloux S."/>
            <person name="Lelaure V."/>
            <person name="Mottier S."/>
            <person name="Galibert F."/>
            <person name="Aves S.J."/>
            <person name="Xiang Z."/>
            <person name="Hunt C."/>
            <person name="Moore K."/>
            <person name="Hurst S.M."/>
            <person name="Lucas M."/>
            <person name="Rochet M."/>
            <person name="Gaillardin C."/>
            <person name="Tallada V.A."/>
            <person name="Garzon A."/>
            <person name="Thode G."/>
            <person name="Daga R.R."/>
            <person name="Cruzado L."/>
            <person name="Jimenez J."/>
            <person name="Sanchez M."/>
            <person name="del Rey F."/>
            <person name="Benito J."/>
            <person name="Dominguez A."/>
            <person name="Revuelta J.L."/>
            <person name="Moreno S."/>
            <person name="Armstrong J."/>
            <person name="Forsburg S.L."/>
            <person name="Cerutti L."/>
            <person name="Lowe T."/>
            <person name="McCombie W.R."/>
            <person name="Paulsen I."/>
            <person name="Potashkin J."/>
            <person name="Shpakovski G.V."/>
            <person name="Ussery D."/>
            <person name="Barrell B.G."/>
            <person name="Nurse P."/>
        </authorList>
    </citation>
    <scope>NUCLEOTIDE SEQUENCE [LARGE SCALE GENOMIC DNA]</scope>
    <source>
        <strain>972 / ATCC 24843</strain>
    </source>
</reference>
<reference key="2">
    <citation type="journal article" date="2006" name="Nat. Biotechnol.">
        <title>ORFeome cloning and global analysis of protein localization in the fission yeast Schizosaccharomyces pombe.</title>
        <authorList>
            <person name="Matsuyama A."/>
            <person name="Arai R."/>
            <person name="Yashiroda Y."/>
            <person name="Shirai A."/>
            <person name="Kamata A."/>
            <person name="Sekido S."/>
            <person name="Kobayashi Y."/>
            <person name="Hashimoto A."/>
            <person name="Hamamoto M."/>
            <person name="Hiraoka Y."/>
            <person name="Horinouchi S."/>
            <person name="Yoshida M."/>
        </authorList>
    </citation>
    <scope>SUBCELLULAR LOCATION [LARGE SCALE ANALYSIS]</scope>
</reference>
<reference key="3">
    <citation type="journal article" date="2008" name="J. Proteome Res.">
        <title>Phosphoproteome analysis of fission yeast.</title>
        <authorList>
            <person name="Wilson-Grady J.T."/>
            <person name="Villen J."/>
            <person name="Gygi S.P."/>
        </authorList>
    </citation>
    <scope>PHOSPHORYLATION [LARGE SCALE ANALYSIS] AT SER-150 AND SER-155</scope>
    <scope>IDENTIFICATION BY MASS SPECTROMETRY</scope>
</reference>
<keyword id="KW-0963">Cytoplasm</keyword>
<keyword id="KW-0479">Metal-binding</keyword>
<keyword id="KW-0597">Phosphoprotein</keyword>
<keyword id="KW-1185">Reference proteome</keyword>
<keyword id="KW-0677">Repeat</keyword>
<keyword id="KW-0690">Ribosome biogenesis</keyword>
<keyword id="KW-0862">Zinc</keyword>
<keyword id="KW-0863">Zinc-finger</keyword>
<dbReference type="EMBL" id="CU329672">
    <property type="protein sequence ID" value="CAA19119.1"/>
    <property type="molecule type" value="Genomic_DNA"/>
</dbReference>
<dbReference type="PIR" id="T41390">
    <property type="entry name" value="T41390"/>
</dbReference>
<dbReference type="BioGRID" id="276124">
    <property type="interactions" value="17"/>
</dbReference>
<dbReference type="FunCoup" id="O59811">
    <property type="interactions" value="328"/>
</dbReference>
<dbReference type="STRING" id="284812.O59811"/>
<dbReference type="iPTMnet" id="O59811"/>
<dbReference type="PaxDb" id="4896-SPCC550.15c.1"/>
<dbReference type="EnsemblFungi" id="SPCC550.15c.1">
    <property type="protein sequence ID" value="SPCC550.15c.1:pep"/>
    <property type="gene ID" value="SPCC550.15c"/>
</dbReference>
<dbReference type="KEGG" id="spo:2539563"/>
<dbReference type="PomBase" id="SPCC550.15c"/>
<dbReference type="VEuPathDB" id="FungiDB:SPCC550.15c"/>
<dbReference type="eggNOG" id="KOG2785">
    <property type="taxonomic scope" value="Eukaryota"/>
</dbReference>
<dbReference type="HOGENOM" id="CLU_018787_1_0_1"/>
<dbReference type="InParanoid" id="O59811"/>
<dbReference type="OMA" id="WTQTQQQ"/>
<dbReference type="PhylomeDB" id="O59811"/>
<dbReference type="PRO" id="PR:O59811"/>
<dbReference type="Proteomes" id="UP000002485">
    <property type="component" value="Chromosome III"/>
</dbReference>
<dbReference type="GO" id="GO:0005829">
    <property type="term" value="C:cytosol"/>
    <property type="evidence" value="ECO:0007005"/>
    <property type="project" value="PomBase"/>
</dbReference>
<dbReference type="GO" id="GO:0030687">
    <property type="term" value="C:preribosome, large subunit precursor"/>
    <property type="evidence" value="ECO:0000318"/>
    <property type="project" value="GO_Central"/>
</dbReference>
<dbReference type="GO" id="GO:0003676">
    <property type="term" value="F:nucleic acid binding"/>
    <property type="evidence" value="ECO:0007669"/>
    <property type="project" value="InterPro"/>
</dbReference>
<dbReference type="GO" id="GO:0008270">
    <property type="term" value="F:zinc ion binding"/>
    <property type="evidence" value="ECO:0007669"/>
    <property type="project" value="UniProtKB-KW"/>
</dbReference>
<dbReference type="GO" id="GO:0006913">
    <property type="term" value="P:nucleocytoplasmic transport"/>
    <property type="evidence" value="ECO:0000266"/>
    <property type="project" value="PomBase"/>
</dbReference>
<dbReference type="GO" id="GO:0042273">
    <property type="term" value="P:ribosomal large subunit biogenesis"/>
    <property type="evidence" value="ECO:0000318"/>
    <property type="project" value="GO_Central"/>
</dbReference>
<dbReference type="Gene3D" id="3.30.160.60">
    <property type="entry name" value="Classic Zinc Finger"/>
    <property type="match status" value="2"/>
</dbReference>
<dbReference type="InterPro" id="IPR003604">
    <property type="entry name" value="Matrin/U1-like-C_Znf_C2H2"/>
</dbReference>
<dbReference type="InterPro" id="IPR041661">
    <property type="entry name" value="ZN622/Rei1/Reh1_Znf-C2H2"/>
</dbReference>
<dbReference type="InterPro" id="IPR040025">
    <property type="entry name" value="Znf622/Rei1/Reh1"/>
</dbReference>
<dbReference type="InterPro" id="IPR036236">
    <property type="entry name" value="Znf_C2H2_sf"/>
</dbReference>
<dbReference type="InterPro" id="IPR013087">
    <property type="entry name" value="Znf_C2H2_type"/>
</dbReference>
<dbReference type="PANTHER" id="PTHR13182:SF8">
    <property type="entry name" value="CYTOPLASMIC 60S SUBUNIT BIOGENESIS FACTOR ZNF622"/>
    <property type="match status" value="1"/>
</dbReference>
<dbReference type="PANTHER" id="PTHR13182">
    <property type="entry name" value="ZINC FINGER PROTEIN 622"/>
    <property type="match status" value="1"/>
</dbReference>
<dbReference type="Pfam" id="PF12756">
    <property type="entry name" value="zf-C2H2_2"/>
    <property type="match status" value="1"/>
</dbReference>
<dbReference type="Pfam" id="PF12874">
    <property type="entry name" value="zf-met"/>
    <property type="match status" value="1"/>
</dbReference>
<dbReference type="SMART" id="SM00355">
    <property type="entry name" value="ZnF_C2H2"/>
    <property type="match status" value="4"/>
</dbReference>
<dbReference type="SMART" id="SM00451">
    <property type="entry name" value="ZnF_U1"/>
    <property type="match status" value="3"/>
</dbReference>
<dbReference type="SUPFAM" id="SSF57667">
    <property type="entry name" value="beta-beta-alpha zinc fingers"/>
    <property type="match status" value="2"/>
</dbReference>
<dbReference type="PROSITE" id="PS00028">
    <property type="entry name" value="ZINC_FINGER_C2H2_1"/>
    <property type="match status" value="4"/>
</dbReference>
<dbReference type="PROSITE" id="PS50157">
    <property type="entry name" value="ZINC_FINGER_C2H2_2"/>
    <property type="match status" value="1"/>
</dbReference>
<protein>
    <recommendedName>
        <fullName>Cytoplasmic 60S subunit biogenesis factor SPCC550.15c</fullName>
    </recommendedName>
    <alternativeName>
        <fullName>pre-60S factor REI1 homolog</fullName>
    </alternativeName>
</protein>
<gene>
    <name type="ORF">SPCC550.15c</name>
</gene>
<proteinExistence type="evidence at protein level"/>
<sequence length="463" mass="52251">MSTSFACTTCTVAFNNAESQKIHWKSDWHHYNLKRKVASLPPLSAEVFAGKILSIQKQNEEVQKKAEFYQNCEVCNKKFYSEGAYSSHMASKKHRDNLSKFQRNSRIKKLQSEDASSIASSTLSMGEPVVDSEIEEEEDLASQLTSRAISLSNLSLHGRESEPSKTELATSIPQSNEASKSHLFTQEPTPEEIEAELARRSSQRLSPRDCLFCAASFSSFDTCKKHMKASHSLYIPEREYLVDEPSLFDYLAEKISIGFTCLTCNREFKSLEAVRAHMQQKGHTSIAYDTEDEQLELSDFYDFTTSYPDYAVKQDETVVEEDGSSGEGDWEDVSDDSDNSSLDSLEMGRVPIADEYELHLPSGNRVGHRSLSRYFRQNLHSSSTAVGDGASIHQNVARRAMSGNARAYRQAVETSIAGVRDGRKNYSASHIKSFQDQRRREEFANKMGIKNNTKKHFRDALLQ</sequence>